<name>INHBB_BOVIN</name>
<accession>P42917</accession>
<reference key="1">
    <citation type="journal article" date="1994" name="Eur. J. Biochem.">
        <title>Genomic cloning and sequence analyses of the bovine alpha-, beta A- and beta B-inhibin/activin genes. Identification of transcription factor AP-2-binding sites in the 5'-flanking regions by DNase I footprinting.</title>
        <authorList>
            <person name="Thompson D.A."/>
            <person name="Cronin C.N."/>
            <person name="Martin F."/>
        </authorList>
    </citation>
    <scope>NUCLEOTIDE SEQUENCE [GENOMIC DNA]</scope>
    <source>
        <tissue>Liver</tissue>
    </source>
</reference>
<sequence>MDGLPGRALGAACLLMLAVGSLGPGVWGSPTPPPLPAAPQPPPPPPGAPGGSQDTCTSCGGFRRPEELGRVDGDFLEAVKRHILNRLQMRGRPNITHAVPKAAMVTALRKLHAGKVREDGRVEIPHLDGHASPGADGQERVSEIISFAETDGLASSRVRLYFFISNEGNQNLFVVQASLWLYLKLLPYVLEKGGRRKVRVKVYGQEQGPGDRWAAVEKRVDLKRSGWHTFPLTEPIQALFSRGERRLSLDVQCDSCRELAVVPVFVDPGEESHRPFVVVQARLGDSRHRIRKRGLECDGRTNLCCRQQFFIDFRLIGWNDWIIAPTGYYGNYCEGSCPAYLAGVPGSASSFHTAVVNQYRMRGLNPGTVNSCCIPTKLSTMSMLYFDDEYNIVKRDVPNMIVEECGCA</sequence>
<organism>
    <name type="scientific">Bos taurus</name>
    <name type="common">Bovine</name>
    <dbReference type="NCBI Taxonomy" id="9913"/>
    <lineage>
        <taxon>Eukaryota</taxon>
        <taxon>Metazoa</taxon>
        <taxon>Chordata</taxon>
        <taxon>Craniata</taxon>
        <taxon>Vertebrata</taxon>
        <taxon>Euteleostomi</taxon>
        <taxon>Mammalia</taxon>
        <taxon>Eutheria</taxon>
        <taxon>Laurasiatheria</taxon>
        <taxon>Artiodactyla</taxon>
        <taxon>Ruminantia</taxon>
        <taxon>Pecora</taxon>
        <taxon>Bovidae</taxon>
        <taxon>Bovinae</taxon>
        <taxon>Bos</taxon>
    </lineage>
</organism>
<dbReference type="EMBL" id="U16241">
    <property type="protein sequence ID" value="AAB60628.1"/>
    <property type="molecule type" value="Genomic_DNA"/>
</dbReference>
<dbReference type="EMBL" id="U16240">
    <property type="protein sequence ID" value="AAB60628.1"/>
    <property type="status" value="JOINED"/>
    <property type="molecule type" value="Genomic_DNA"/>
</dbReference>
<dbReference type="PIR" id="S50899">
    <property type="entry name" value="S50899"/>
</dbReference>
<dbReference type="SMR" id="P42917"/>
<dbReference type="FunCoup" id="P42917">
    <property type="interactions" value="373"/>
</dbReference>
<dbReference type="STRING" id="9913.ENSBTAP00000058236"/>
<dbReference type="GlyCosmos" id="P42917">
    <property type="glycosylation" value="1 site, No reported glycans"/>
</dbReference>
<dbReference type="GlyGen" id="P42917">
    <property type="glycosylation" value="1 site"/>
</dbReference>
<dbReference type="PaxDb" id="9913-ENSBTAP00000042801"/>
<dbReference type="eggNOG" id="KOG3900">
    <property type="taxonomic scope" value="Eukaryota"/>
</dbReference>
<dbReference type="InParanoid" id="P42917"/>
<dbReference type="Proteomes" id="UP000009136">
    <property type="component" value="Unplaced"/>
</dbReference>
<dbReference type="GO" id="GO:0005615">
    <property type="term" value="C:extracellular space"/>
    <property type="evidence" value="ECO:0000318"/>
    <property type="project" value="GO_Central"/>
</dbReference>
<dbReference type="GO" id="GO:0048471">
    <property type="term" value="C:perinuclear region of cytoplasm"/>
    <property type="evidence" value="ECO:0000250"/>
    <property type="project" value="UniProtKB"/>
</dbReference>
<dbReference type="GO" id="GO:0005125">
    <property type="term" value="F:cytokine activity"/>
    <property type="evidence" value="ECO:0000318"/>
    <property type="project" value="GO_Central"/>
</dbReference>
<dbReference type="GO" id="GO:0008083">
    <property type="term" value="F:growth factor activity"/>
    <property type="evidence" value="ECO:0007669"/>
    <property type="project" value="UniProtKB-KW"/>
</dbReference>
<dbReference type="GO" id="GO:0005179">
    <property type="term" value="F:hormone activity"/>
    <property type="evidence" value="ECO:0007669"/>
    <property type="project" value="UniProtKB-KW"/>
</dbReference>
<dbReference type="GO" id="GO:0042803">
    <property type="term" value="F:protein homodimerization activity"/>
    <property type="evidence" value="ECO:0000250"/>
    <property type="project" value="AgBase"/>
</dbReference>
<dbReference type="GO" id="GO:0032924">
    <property type="term" value="P:activin receptor signaling pathway"/>
    <property type="evidence" value="ECO:0000250"/>
    <property type="project" value="UniProtKB"/>
</dbReference>
<dbReference type="GO" id="GO:0032869">
    <property type="term" value="P:cellular response to insulin stimulus"/>
    <property type="evidence" value="ECO:0000250"/>
    <property type="project" value="UniProtKB"/>
</dbReference>
<dbReference type="GO" id="GO:0009267">
    <property type="term" value="P:cellular response to starvation"/>
    <property type="evidence" value="ECO:0000250"/>
    <property type="project" value="UniProtKB"/>
</dbReference>
<dbReference type="GO" id="GO:0045444">
    <property type="term" value="P:fat cell differentiation"/>
    <property type="evidence" value="ECO:0000250"/>
    <property type="project" value="UniProtKB"/>
</dbReference>
<dbReference type="GO" id="GO:0046882">
    <property type="term" value="P:negative regulation of follicle-stimulating hormone secretion"/>
    <property type="evidence" value="ECO:0000250"/>
    <property type="project" value="AgBase"/>
</dbReference>
<dbReference type="GO" id="GO:0032686">
    <property type="term" value="P:negative regulation of hepatocyte growth factor production"/>
    <property type="evidence" value="ECO:0000250"/>
    <property type="project" value="AgBase"/>
</dbReference>
<dbReference type="GO" id="GO:0046676">
    <property type="term" value="P:negative regulation of insulin secretion"/>
    <property type="evidence" value="ECO:0000250"/>
    <property type="project" value="UniProtKB"/>
</dbReference>
<dbReference type="GO" id="GO:0046881">
    <property type="term" value="P:positive regulation of follicle-stimulating hormone secretion"/>
    <property type="evidence" value="ECO:0000250"/>
    <property type="project" value="AgBase"/>
</dbReference>
<dbReference type="GO" id="GO:0060279">
    <property type="term" value="P:positive regulation of ovulation"/>
    <property type="evidence" value="ECO:0000250"/>
    <property type="project" value="UniProtKB"/>
</dbReference>
<dbReference type="GO" id="GO:0009611">
    <property type="term" value="P:response to wounding"/>
    <property type="evidence" value="ECO:0000250"/>
    <property type="project" value="AgBase"/>
</dbReference>
<dbReference type="CDD" id="cd19405">
    <property type="entry name" value="TGF_beta_INHBB"/>
    <property type="match status" value="1"/>
</dbReference>
<dbReference type="FunFam" id="2.10.90.10:FF:000005">
    <property type="entry name" value="Inhibin beta A chain"/>
    <property type="match status" value="1"/>
</dbReference>
<dbReference type="FunFam" id="2.60.120.970:FF:000012">
    <property type="entry name" value="inhibin beta B chain"/>
    <property type="match status" value="1"/>
</dbReference>
<dbReference type="Gene3D" id="2.60.120.970">
    <property type="match status" value="1"/>
</dbReference>
<dbReference type="Gene3D" id="2.10.90.10">
    <property type="entry name" value="Cystine-knot cytokines"/>
    <property type="match status" value="1"/>
</dbReference>
<dbReference type="InterPro" id="IPR029034">
    <property type="entry name" value="Cystine-knot_cytokine"/>
</dbReference>
<dbReference type="InterPro" id="IPR000381">
    <property type="entry name" value="INHBB_C"/>
</dbReference>
<dbReference type="InterPro" id="IPR001839">
    <property type="entry name" value="TGF-b_C"/>
</dbReference>
<dbReference type="InterPro" id="IPR001111">
    <property type="entry name" value="TGF-b_propeptide"/>
</dbReference>
<dbReference type="InterPro" id="IPR015615">
    <property type="entry name" value="TGF-beta-rel"/>
</dbReference>
<dbReference type="InterPro" id="IPR017948">
    <property type="entry name" value="TGFb_CS"/>
</dbReference>
<dbReference type="PANTHER" id="PTHR11848:SF29">
    <property type="entry name" value="INHIBIN BETA B CHAIN"/>
    <property type="match status" value="1"/>
</dbReference>
<dbReference type="PANTHER" id="PTHR11848">
    <property type="entry name" value="TGF-BETA FAMILY"/>
    <property type="match status" value="1"/>
</dbReference>
<dbReference type="Pfam" id="PF00019">
    <property type="entry name" value="TGF_beta"/>
    <property type="match status" value="1"/>
</dbReference>
<dbReference type="Pfam" id="PF00688">
    <property type="entry name" value="TGFb_propeptide"/>
    <property type="match status" value="1"/>
</dbReference>
<dbReference type="PRINTS" id="PR00671">
    <property type="entry name" value="INHIBINBB"/>
</dbReference>
<dbReference type="SMART" id="SM00204">
    <property type="entry name" value="TGFB"/>
    <property type="match status" value="1"/>
</dbReference>
<dbReference type="SUPFAM" id="SSF57501">
    <property type="entry name" value="Cystine-knot cytokines"/>
    <property type="match status" value="1"/>
</dbReference>
<dbReference type="PROSITE" id="PS00250">
    <property type="entry name" value="TGF_BETA_1"/>
    <property type="match status" value="1"/>
</dbReference>
<dbReference type="PROSITE" id="PS51362">
    <property type="entry name" value="TGF_BETA_2"/>
    <property type="match status" value="1"/>
</dbReference>
<comment type="function">
    <text evidence="3">Inhibins and activins inhibit and activate, respectively, the secretion of follitropin by the pituitary gland. Inhibins/activins are involved in regulating a number of diverse functions such as hypothalamic and pituitary hormone secretion, gonadal hormone secretion, germ cell development and maturation, erythroid differentiation, insulin secretion, nerve cell survival, embryonic axial development or bone growth, depending on their subunit composition. Inhibins appear to oppose the functions of activins.</text>
</comment>
<comment type="function">
    <text evidence="3">Activin B is a dimer of alpha and beta-B that plays a role in several essential biological processes including embryonic development, stem cell maintenance and differentiation, haematopoiesis, cell proliferation and wound healing. Signals through type I receptor ACVR1C, abundantly expressed in pancreatic beta cells, and type II receptors like ACVR2A. Upon ligand binding, these receptors phosphorylate intracellular signaling mediators SMAD2 and SMAD3, which form a complex with SMAD4, translocate to the nucleus, and regulate gene expression. Plays a crucial role in the induction of hepcidin by inflammation through activation of ACVR1C and subsequent phosphorylation of SMAD1/5/8 (By similarity). Regulates adipocyte lipid metabolism by decreasing non-esterified fatty acids and glycerol release and increases intracellular triglyceride content (By similarity). Stimulates wound healing by promoting cell migration and hair follicle regeneration through the JNK and ERK signaling pathways downstream of RHOA (By similarity).</text>
</comment>
<comment type="function">
    <text evidence="2 4">Inhibin B is a dimer of alpha and beta-B that plays a crucial role in the regulation of the reproductive system by inhibiting the secretion of follicle-stimulating hormone (FSH) from the anterior pituitary gland. Thereby, maintains reproductive homeostasis in both males and females. Acts as a more potent suppressor of FSH release than inhibin A (By similarity). Functions as competitive receptor antagonist binding activin type II receptors with high affinity in the presence of the TGF-beta type III coreceptor/TGFBR3L (By similarity).</text>
</comment>
<comment type="subunit">
    <text evidence="3">Dimeric, linked by one or more disulfide bonds. Inhibin B is a dimer of alpha and beta-B. Activin B is a homodimer of beta-B. Activin AB is a dimer of beta-A and beta-B. Interacts with FST and FSTL3.</text>
</comment>
<comment type="subcellular location">
    <subcellularLocation>
        <location evidence="1">Secreted</location>
    </subcellularLocation>
</comment>
<comment type="similarity">
    <text evidence="7">Belongs to the TGF-beta family.</text>
</comment>
<gene>
    <name type="primary">INHBB</name>
</gene>
<proteinExistence type="inferred from homology"/>
<keyword id="KW-0165">Cleavage on pair of basic residues</keyword>
<keyword id="KW-1015">Disulfide bond</keyword>
<keyword id="KW-0325">Glycoprotein</keyword>
<keyword id="KW-0339">Growth factor</keyword>
<keyword id="KW-0372">Hormone</keyword>
<keyword id="KW-1185">Reference proteome</keyword>
<keyword id="KW-0964">Secreted</keyword>
<keyword id="KW-0732">Signal</keyword>
<feature type="signal peptide" evidence="5">
    <location>
        <begin position="1"/>
        <end position="28"/>
    </location>
</feature>
<feature type="propeptide" id="PRO_0000033718" evidence="5">
    <location>
        <begin position="29"/>
        <end position="293"/>
    </location>
</feature>
<feature type="chain" id="PRO_0000033719" description="Inhibin beta B chain">
    <location>
        <begin position="294"/>
        <end position="408"/>
    </location>
</feature>
<feature type="region of interest" description="Disordered" evidence="6">
    <location>
        <begin position="29"/>
        <end position="60"/>
    </location>
</feature>
<feature type="compositionally biased region" description="Pro residues" evidence="6">
    <location>
        <begin position="30"/>
        <end position="48"/>
    </location>
</feature>
<feature type="glycosylation site" description="N-linked (GlcNAc...) asparagine" evidence="5">
    <location>
        <position position="94"/>
    </location>
</feature>
<feature type="disulfide bond" evidence="3">
    <location>
        <begin position="297"/>
        <end position="305"/>
    </location>
</feature>
<feature type="disulfide bond" evidence="3">
    <location>
        <begin position="304"/>
        <end position="373"/>
    </location>
</feature>
<feature type="disulfide bond" evidence="3">
    <location>
        <begin position="333"/>
        <end position="405"/>
    </location>
</feature>
<feature type="disulfide bond" evidence="3">
    <location>
        <begin position="337"/>
        <end position="407"/>
    </location>
</feature>
<feature type="disulfide bond" description="Interchain" evidence="3">
    <location>
        <position position="372"/>
    </location>
</feature>
<protein>
    <recommendedName>
        <fullName>Inhibin beta B chain</fullName>
    </recommendedName>
    <alternativeName>
        <fullName>Activin beta-B chain</fullName>
    </alternativeName>
</protein>
<evidence type="ECO:0000250" key="1"/>
<evidence type="ECO:0000250" key="2">
    <source>
        <dbReference type="UniProtKB" id="P05111"/>
    </source>
</evidence>
<evidence type="ECO:0000250" key="3">
    <source>
        <dbReference type="UniProtKB" id="P09529"/>
    </source>
</evidence>
<evidence type="ECO:0000250" key="4">
    <source>
        <dbReference type="UniProtKB" id="P17490"/>
    </source>
</evidence>
<evidence type="ECO:0000255" key="5"/>
<evidence type="ECO:0000256" key="6">
    <source>
        <dbReference type="SAM" id="MobiDB-lite"/>
    </source>
</evidence>
<evidence type="ECO:0000305" key="7"/>